<comment type="function">
    <text evidence="1">Probable heme-thiolate monooxygenase.</text>
</comment>
<comment type="cofactor">
    <cofactor evidence="1">
        <name>heme</name>
        <dbReference type="ChEBI" id="CHEBI:30413"/>
    </cofactor>
</comment>
<comment type="subcellular location">
    <subcellularLocation>
        <location evidence="3">Membrane</location>
        <topology evidence="3">Single-pass membrane protein</topology>
    </subcellularLocation>
</comment>
<comment type="similarity">
    <text evidence="3">Belongs to the cytochrome P450 family.</text>
</comment>
<feature type="chain" id="PRO_0000425879" description="Cytochrome P450 CYP736A12">
    <location>
        <begin position="1"/>
        <end position="500"/>
    </location>
</feature>
<feature type="transmembrane region" description="Helical" evidence="2">
    <location>
        <begin position="4"/>
        <end position="24"/>
    </location>
</feature>
<feature type="binding site" description="axial binding residue" evidence="1">
    <location>
        <position position="442"/>
    </location>
    <ligand>
        <name>heme</name>
        <dbReference type="ChEBI" id="CHEBI:30413"/>
    </ligand>
    <ligandPart>
        <name>Fe</name>
        <dbReference type="ChEBI" id="CHEBI:18248"/>
    </ligandPart>
</feature>
<proteinExistence type="evidence at transcript level"/>
<dbReference type="EC" id="1.14.-.-"/>
<dbReference type="EMBL" id="JN604539">
    <property type="protein sequence ID" value="AEY75215.1"/>
    <property type="molecule type" value="mRNA"/>
</dbReference>
<dbReference type="SMR" id="H2DH18"/>
<dbReference type="GO" id="GO:0016020">
    <property type="term" value="C:membrane"/>
    <property type="evidence" value="ECO:0007669"/>
    <property type="project" value="UniProtKB-SubCell"/>
</dbReference>
<dbReference type="GO" id="GO:0020037">
    <property type="term" value="F:heme binding"/>
    <property type="evidence" value="ECO:0007669"/>
    <property type="project" value="InterPro"/>
</dbReference>
<dbReference type="GO" id="GO:0005506">
    <property type="term" value="F:iron ion binding"/>
    <property type="evidence" value="ECO:0007669"/>
    <property type="project" value="InterPro"/>
</dbReference>
<dbReference type="GO" id="GO:0004497">
    <property type="term" value="F:monooxygenase activity"/>
    <property type="evidence" value="ECO:0007669"/>
    <property type="project" value="UniProtKB-KW"/>
</dbReference>
<dbReference type="GO" id="GO:0016705">
    <property type="term" value="F:oxidoreductase activity, acting on paired donors, with incorporation or reduction of molecular oxygen"/>
    <property type="evidence" value="ECO:0007669"/>
    <property type="project" value="InterPro"/>
</dbReference>
<dbReference type="CDD" id="cd11072">
    <property type="entry name" value="CYP71-like"/>
    <property type="match status" value="1"/>
</dbReference>
<dbReference type="FunFam" id="1.10.630.10:FF:000011">
    <property type="entry name" value="Cytochrome P450 83B1"/>
    <property type="match status" value="1"/>
</dbReference>
<dbReference type="Gene3D" id="1.10.630.10">
    <property type="entry name" value="Cytochrome P450"/>
    <property type="match status" value="1"/>
</dbReference>
<dbReference type="InterPro" id="IPR001128">
    <property type="entry name" value="Cyt_P450"/>
</dbReference>
<dbReference type="InterPro" id="IPR017972">
    <property type="entry name" value="Cyt_P450_CS"/>
</dbReference>
<dbReference type="InterPro" id="IPR002401">
    <property type="entry name" value="Cyt_P450_E_grp-I"/>
</dbReference>
<dbReference type="InterPro" id="IPR036396">
    <property type="entry name" value="Cyt_P450_sf"/>
</dbReference>
<dbReference type="PANTHER" id="PTHR47943:SF9">
    <property type="entry name" value="CYTOCHROME P450"/>
    <property type="match status" value="1"/>
</dbReference>
<dbReference type="PANTHER" id="PTHR47943">
    <property type="entry name" value="CYTOCHROME P450 93A3-LIKE"/>
    <property type="match status" value="1"/>
</dbReference>
<dbReference type="Pfam" id="PF00067">
    <property type="entry name" value="p450"/>
    <property type="match status" value="1"/>
</dbReference>
<dbReference type="PRINTS" id="PR00463">
    <property type="entry name" value="EP450I"/>
</dbReference>
<dbReference type="PRINTS" id="PR00385">
    <property type="entry name" value="P450"/>
</dbReference>
<dbReference type="SUPFAM" id="SSF48264">
    <property type="entry name" value="Cytochrome P450"/>
    <property type="match status" value="1"/>
</dbReference>
<dbReference type="PROSITE" id="PS00086">
    <property type="entry name" value="CYTOCHROME_P450"/>
    <property type="match status" value="1"/>
</dbReference>
<reference key="1">
    <citation type="journal article" date="2011" name="Plant Cell Physiol.">
        <title>The Cyt P450 enzyme CYP716A47 catalyzes the formation of protopanaxadiol from dammarenediol-II during ginsenoside biosynthesis in Panax ginseng.</title>
        <authorList>
            <person name="Han J.Y."/>
            <person name="Kim H.J."/>
            <person name="Kwon Y.S."/>
            <person name="Choi Y.E."/>
        </authorList>
    </citation>
    <scope>NUCLEOTIDE SEQUENCE [MRNA]</scope>
</reference>
<protein>
    <recommendedName>
        <fullName>Cytochrome P450 CYP736A12</fullName>
        <ecNumber>1.14.-.-</ecNumber>
    </recommendedName>
</protein>
<sequence>MFPLAYPLLFVLLGALSWWILPIISPLKRHHKLPPGPRGLPIIGSLHTLGALPHRTLQTLAKKYGPIMSMRLGSVPTIVVSSPQAAELFLKTHDNIFASRPKLQAAEYMSYGTMGMSFTAYGPHWRNIRKFVVLELLTPAKINSFVGMRREELGTVVKSIKEASAANEVVDLSAKVANIIENMTYRLLLGRTKDDRYDLKGIMNEALTLAGRFNIADFVPFLGPLDIQGLTRQFKDTGKRLDKILEFIIDEHEQNSSNGNASGDFIDDMLSLKNKPSNTHDELSKVIDRSVIKAIMIDIISAAIDTSDTSIEWILTELIKHPRAMKKCQEEIDAVVGVDRMVEETDLPNLEYVYMVVKEGLRLHPVAPLLGPHESMEDITINGYFIPKQSRVIVNSWALGRDPNVWSENAEEFLPERFEGSNVDVRGRDFQLLPFGSGRRGCPGMQLGLITVQLVVARLVHCFDWNLPNGTTPDNLDMTEKFGLTTPRVKHLLAVPKYRL</sequence>
<organism>
    <name type="scientific">Panax ginseng</name>
    <name type="common">Korean ginseng</name>
    <dbReference type="NCBI Taxonomy" id="4054"/>
    <lineage>
        <taxon>Eukaryota</taxon>
        <taxon>Viridiplantae</taxon>
        <taxon>Streptophyta</taxon>
        <taxon>Embryophyta</taxon>
        <taxon>Tracheophyta</taxon>
        <taxon>Spermatophyta</taxon>
        <taxon>Magnoliopsida</taxon>
        <taxon>eudicotyledons</taxon>
        <taxon>Gunneridae</taxon>
        <taxon>Pentapetalae</taxon>
        <taxon>asterids</taxon>
        <taxon>campanulids</taxon>
        <taxon>Apiales</taxon>
        <taxon>Araliaceae</taxon>
        <taxon>Panax</taxon>
    </lineage>
</organism>
<evidence type="ECO:0000250" key="1"/>
<evidence type="ECO:0000255" key="2"/>
<evidence type="ECO:0000305" key="3"/>
<name>C7A12_PANGI</name>
<accession>H2DH18</accession>
<keyword id="KW-0349">Heme</keyword>
<keyword id="KW-0408">Iron</keyword>
<keyword id="KW-0472">Membrane</keyword>
<keyword id="KW-0479">Metal-binding</keyword>
<keyword id="KW-0503">Monooxygenase</keyword>
<keyword id="KW-0560">Oxidoreductase</keyword>
<keyword id="KW-0812">Transmembrane</keyword>
<keyword id="KW-1133">Transmembrane helix</keyword>